<proteinExistence type="inferred from homology"/>
<accession>Q75AD1</accession>
<evidence type="ECO:0000255" key="1">
    <source>
        <dbReference type="HAMAP-Rule" id="MF_03048"/>
    </source>
</evidence>
<comment type="function">
    <text evidence="1">Acts as a sulfur carrier required for 2-thiolation of mcm(5)S(2)U at tRNA wobble positions of cytosolic tRNA(Lys), tRNA(Glu) and tRNA(Gln). Serves as sulfur donor in tRNA 2-thiolation reaction by being thiocarboxylated (-COSH) at its C-terminus by the MOCS3 homolog UBA4. The sulfur is then transferred to tRNA to form 2-thiolation of mcm(5)S(2)U. Prior mcm(5) tRNA modification by the elongator complex is required for 2-thiolation. Also acts as a ubiquitin-like protein (UBL) that is covalently conjugated via an isopeptide bond to lysine residues of target proteins such as AHP1. The thiocarboxylated form serves as substrate for conjugation and oxidative stress specifically induces the formation of UBL-protein conjugates.</text>
</comment>
<comment type="pathway">
    <text evidence="1">tRNA modification; 5-methoxycarbonylmethyl-2-thiouridine-tRNA biosynthesis.</text>
</comment>
<comment type="subcellular location">
    <subcellularLocation>
        <location evidence="1">Cytoplasm</location>
    </subcellularLocation>
</comment>
<comment type="PTM">
    <text evidence="1">C-terminal thiocarboxylation occurs in 2 steps, it is first acyl-adenylated (-COAMP) via the hesA/moeB/thiF part of UBA4, then thiocarboxylated (-COSH) via the rhodanese domain of UBA4.</text>
</comment>
<comment type="similarity">
    <text evidence="1">Belongs to the URM1 family.</text>
</comment>
<organism>
    <name type="scientific">Eremothecium gossypii (strain ATCC 10895 / CBS 109.51 / FGSC 9923 / NRRL Y-1056)</name>
    <name type="common">Yeast</name>
    <name type="synonym">Ashbya gossypii</name>
    <dbReference type="NCBI Taxonomy" id="284811"/>
    <lineage>
        <taxon>Eukaryota</taxon>
        <taxon>Fungi</taxon>
        <taxon>Dikarya</taxon>
        <taxon>Ascomycota</taxon>
        <taxon>Saccharomycotina</taxon>
        <taxon>Saccharomycetes</taxon>
        <taxon>Saccharomycetales</taxon>
        <taxon>Saccharomycetaceae</taxon>
        <taxon>Eremothecium</taxon>
    </lineage>
</organism>
<dbReference type="EMBL" id="AE016817">
    <property type="protein sequence ID" value="AAS51907.1"/>
    <property type="molecule type" value="Genomic_DNA"/>
</dbReference>
<dbReference type="RefSeq" id="NP_984083.1">
    <property type="nucleotide sequence ID" value="NM_209436.1"/>
</dbReference>
<dbReference type="SMR" id="Q75AD1"/>
<dbReference type="FunCoup" id="Q75AD1">
    <property type="interactions" value="930"/>
</dbReference>
<dbReference type="STRING" id="284811.Q75AD1"/>
<dbReference type="EnsemblFungi" id="AAS51907">
    <property type="protein sequence ID" value="AAS51907"/>
    <property type="gene ID" value="AGOS_ADL014W"/>
</dbReference>
<dbReference type="GeneID" id="4620371"/>
<dbReference type="KEGG" id="ago:AGOS_ADL014W"/>
<dbReference type="eggNOG" id="KOG4146">
    <property type="taxonomic scope" value="Eukaryota"/>
</dbReference>
<dbReference type="HOGENOM" id="CLU_148208_0_0_1"/>
<dbReference type="InParanoid" id="Q75AD1"/>
<dbReference type="OMA" id="DYELQPN"/>
<dbReference type="OrthoDB" id="10248987at2759"/>
<dbReference type="UniPathway" id="UPA00988"/>
<dbReference type="Proteomes" id="UP000000591">
    <property type="component" value="Chromosome IV"/>
</dbReference>
<dbReference type="GO" id="GO:0005829">
    <property type="term" value="C:cytosol"/>
    <property type="evidence" value="ECO:0007669"/>
    <property type="project" value="UniProtKB-UniRule"/>
</dbReference>
<dbReference type="GO" id="GO:0005634">
    <property type="term" value="C:nucleus"/>
    <property type="evidence" value="ECO:0000318"/>
    <property type="project" value="GO_Central"/>
</dbReference>
<dbReference type="GO" id="GO:0042803">
    <property type="term" value="F:protein homodimerization activity"/>
    <property type="evidence" value="ECO:0007669"/>
    <property type="project" value="EnsemblFungi"/>
</dbReference>
<dbReference type="GO" id="GO:0031386">
    <property type="term" value="F:protein tag activity"/>
    <property type="evidence" value="ECO:0000318"/>
    <property type="project" value="GO_Central"/>
</dbReference>
<dbReference type="GO" id="GO:0097163">
    <property type="term" value="F:sulfur carrier activity"/>
    <property type="evidence" value="ECO:0007669"/>
    <property type="project" value="EnsemblFungi"/>
</dbReference>
<dbReference type="GO" id="GO:0007114">
    <property type="term" value="P:cell budding"/>
    <property type="evidence" value="ECO:0007669"/>
    <property type="project" value="EnsemblFungi"/>
</dbReference>
<dbReference type="GO" id="GO:0034599">
    <property type="term" value="P:cellular response to oxidative stress"/>
    <property type="evidence" value="ECO:0007669"/>
    <property type="project" value="EnsemblFungi"/>
</dbReference>
<dbReference type="GO" id="GO:0001403">
    <property type="term" value="P:invasive growth in response to glucose limitation"/>
    <property type="evidence" value="ECO:0007669"/>
    <property type="project" value="EnsemblFungi"/>
</dbReference>
<dbReference type="GO" id="GO:0032447">
    <property type="term" value="P:protein urmylation"/>
    <property type="evidence" value="ECO:0000318"/>
    <property type="project" value="GO_Central"/>
</dbReference>
<dbReference type="GO" id="GO:0002143">
    <property type="term" value="P:tRNA wobble position uridine thiolation"/>
    <property type="evidence" value="ECO:0007669"/>
    <property type="project" value="EnsemblFungi"/>
</dbReference>
<dbReference type="CDD" id="cd01764">
    <property type="entry name" value="Ubl_Urm1"/>
    <property type="match status" value="1"/>
</dbReference>
<dbReference type="FunFam" id="3.10.20.30:FF:000052">
    <property type="entry name" value="Ubiquitin-related modifier 1"/>
    <property type="match status" value="1"/>
</dbReference>
<dbReference type="Gene3D" id="3.10.20.30">
    <property type="match status" value="1"/>
</dbReference>
<dbReference type="HAMAP" id="MF_03048">
    <property type="entry name" value="Urm1"/>
    <property type="match status" value="1"/>
</dbReference>
<dbReference type="InterPro" id="IPR012675">
    <property type="entry name" value="Beta-grasp_dom_sf"/>
</dbReference>
<dbReference type="InterPro" id="IPR016155">
    <property type="entry name" value="Mopterin_synth/thiamin_S_b"/>
</dbReference>
<dbReference type="InterPro" id="IPR015221">
    <property type="entry name" value="Urm1"/>
</dbReference>
<dbReference type="PANTHER" id="PTHR14986">
    <property type="entry name" value="RURM1 PROTEIN"/>
    <property type="match status" value="1"/>
</dbReference>
<dbReference type="Pfam" id="PF09138">
    <property type="entry name" value="Urm1"/>
    <property type="match status" value="1"/>
</dbReference>
<dbReference type="PIRSF" id="PIRSF037379">
    <property type="entry name" value="Ubiquitin-related_modifier_1"/>
    <property type="match status" value="1"/>
</dbReference>
<dbReference type="SUPFAM" id="SSF54285">
    <property type="entry name" value="MoaD/ThiS"/>
    <property type="match status" value="1"/>
</dbReference>
<gene>
    <name evidence="1" type="primary">URM1</name>
    <name type="ordered locus">ADL014W</name>
</gene>
<reference key="1">
    <citation type="journal article" date="2004" name="Science">
        <title>The Ashbya gossypii genome as a tool for mapping the ancient Saccharomyces cerevisiae genome.</title>
        <authorList>
            <person name="Dietrich F.S."/>
            <person name="Voegeli S."/>
            <person name="Brachat S."/>
            <person name="Lerch A."/>
            <person name="Gates K."/>
            <person name="Steiner S."/>
            <person name="Mohr C."/>
            <person name="Poehlmann R."/>
            <person name="Luedi P."/>
            <person name="Choi S."/>
            <person name="Wing R.A."/>
            <person name="Flavier A."/>
            <person name="Gaffney T.D."/>
            <person name="Philippsen P."/>
        </authorList>
    </citation>
    <scope>NUCLEOTIDE SEQUENCE [LARGE SCALE GENOMIC DNA]</scope>
    <source>
        <strain>ATCC 10895 / CBS 109.51 / FGSC 9923 / NRRL Y-1056</strain>
    </source>
</reference>
<reference key="2">
    <citation type="journal article" date="2013" name="G3 (Bethesda)">
        <title>Genomes of Ashbya fungi isolated from insects reveal four mating-type loci, numerous translocations, lack of transposons, and distinct gene duplications.</title>
        <authorList>
            <person name="Dietrich F.S."/>
            <person name="Voegeli S."/>
            <person name="Kuo S."/>
            <person name="Philippsen P."/>
        </authorList>
    </citation>
    <scope>GENOME REANNOTATION</scope>
    <source>
        <strain>ATCC 10895 / CBS 109.51 / FGSC 9923 / NRRL Y-1056</strain>
    </source>
</reference>
<feature type="chain" id="PRO_0000330334" description="Ubiquitin-related modifier 1">
    <location>
        <begin position="1"/>
        <end position="100"/>
    </location>
</feature>
<feature type="modified residue" description="1-thioglycine" evidence="1">
    <location>
        <position position="100"/>
    </location>
</feature>
<feature type="cross-link" description="Glycyl lysine isopeptide (Gly-Lys) (interchain with K-? in acceptor proteins)" evidence="1">
    <location>
        <position position="100"/>
    </location>
</feature>
<name>URM1_EREGS</name>
<keyword id="KW-0963">Cytoplasm</keyword>
<keyword id="KW-1017">Isopeptide bond</keyword>
<keyword id="KW-1185">Reference proteome</keyword>
<keyword id="KW-0819">tRNA processing</keyword>
<keyword id="KW-0833">Ubl conjugation pathway</keyword>
<protein>
    <recommendedName>
        <fullName evidence="1">Ubiquitin-related modifier 1</fullName>
    </recommendedName>
</protein>
<sequence length="100" mass="11070">MVQVQVEFLGGLDVIFSKQRKHQVSVEGANGSVTVGDLIDYIVSNMIQKQKDVSVFLEDNTIRPGILTLINDTDWELEGEKEYVLEDGDIVSFTSTLHGG</sequence>